<name>NPD_BACHK</name>
<protein>
    <recommendedName>
        <fullName evidence="1">NAD-dependent protein deacetylase</fullName>
        <ecNumber evidence="1 2">2.3.1.286</ecNumber>
    </recommendedName>
    <alternativeName>
        <fullName evidence="1">Regulatory protein SIR2 homolog</fullName>
    </alternativeName>
</protein>
<proteinExistence type="inferred from homology"/>
<organism>
    <name type="scientific">Bacillus thuringiensis subsp. konkukian (strain 97-27)</name>
    <dbReference type="NCBI Taxonomy" id="281309"/>
    <lineage>
        <taxon>Bacteria</taxon>
        <taxon>Bacillati</taxon>
        <taxon>Bacillota</taxon>
        <taxon>Bacilli</taxon>
        <taxon>Bacillales</taxon>
        <taxon>Bacillaceae</taxon>
        <taxon>Bacillus</taxon>
        <taxon>Bacillus cereus group</taxon>
    </lineage>
</organism>
<feature type="chain" id="PRO_0000110292" description="NAD-dependent protein deacetylase">
    <location>
        <begin position="1"/>
        <end position="245"/>
    </location>
</feature>
<feature type="domain" description="Deacetylase sirtuin-type" evidence="2">
    <location>
        <begin position="1"/>
        <end position="245"/>
    </location>
</feature>
<feature type="active site" description="Proton acceptor" evidence="2">
    <location>
        <position position="123"/>
    </location>
</feature>
<feature type="binding site" evidence="1">
    <location>
        <position position="26"/>
    </location>
    <ligand>
        <name>NAD(+)</name>
        <dbReference type="ChEBI" id="CHEBI:57540"/>
    </ligand>
</feature>
<feature type="binding site" evidence="1">
    <location>
        <position position="30"/>
    </location>
    <ligand>
        <name>NAD(+)</name>
        <dbReference type="ChEBI" id="CHEBI:57540"/>
    </ligand>
</feature>
<feature type="binding site" evidence="1">
    <location>
        <position position="37"/>
    </location>
    <ligand>
        <name>NAD(+)</name>
        <dbReference type="ChEBI" id="CHEBI:57540"/>
    </ligand>
</feature>
<feature type="binding site" evidence="1">
    <location>
        <position position="37"/>
    </location>
    <ligand>
        <name>nicotinamide</name>
        <dbReference type="ChEBI" id="CHEBI:17154"/>
    </ligand>
</feature>
<feature type="binding site" evidence="1">
    <location>
        <position position="38"/>
    </location>
    <ligand>
        <name>NAD(+)</name>
        <dbReference type="ChEBI" id="CHEBI:57540"/>
    </ligand>
</feature>
<feature type="binding site" evidence="1">
    <location>
        <position position="105"/>
    </location>
    <ligand>
        <name>NAD(+)</name>
        <dbReference type="ChEBI" id="CHEBI:57540"/>
    </ligand>
</feature>
<feature type="binding site" evidence="1">
    <location>
        <position position="107"/>
    </location>
    <ligand>
        <name>NAD(+)</name>
        <dbReference type="ChEBI" id="CHEBI:57540"/>
    </ligand>
</feature>
<feature type="binding site" evidence="1">
    <location>
        <position position="107"/>
    </location>
    <ligand>
        <name>nicotinamide</name>
        <dbReference type="ChEBI" id="CHEBI:17154"/>
    </ligand>
</feature>
<feature type="binding site" evidence="1">
    <location>
        <position position="108"/>
    </location>
    <ligand>
        <name>NAD(+)</name>
        <dbReference type="ChEBI" id="CHEBI:57540"/>
    </ligand>
</feature>
<feature type="binding site" evidence="1">
    <location>
        <position position="108"/>
    </location>
    <ligand>
        <name>nicotinamide</name>
        <dbReference type="ChEBI" id="CHEBI:17154"/>
    </ligand>
</feature>
<feature type="binding site" evidence="1">
    <location>
        <position position="123"/>
    </location>
    <ligand>
        <name>NAD(+)</name>
        <dbReference type="ChEBI" id="CHEBI:57540"/>
    </ligand>
</feature>
<feature type="binding site" evidence="1">
    <location>
        <position position="131"/>
    </location>
    <ligand>
        <name>Zn(2+)</name>
        <dbReference type="ChEBI" id="CHEBI:29105"/>
    </ligand>
</feature>
<feature type="binding site" evidence="1">
    <location>
        <position position="134"/>
    </location>
    <ligand>
        <name>Zn(2+)</name>
        <dbReference type="ChEBI" id="CHEBI:29105"/>
    </ligand>
</feature>
<feature type="binding site" evidence="1">
    <location>
        <position position="151"/>
    </location>
    <ligand>
        <name>Zn(2+)</name>
        <dbReference type="ChEBI" id="CHEBI:29105"/>
    </ligand>
</feature>
<feature type="binding site" evidence="1">
    <location>
        <position position="154"/>
    </location>
    <ligand>
        <name>Zn(2+)</name>
        <dbReference type="ChEBI" id="CHEBI:29105"/>
    </ligand>
</feature>
<feature type="binding site" evidence="1">
    <location>
        <position position="190"/>
    </location>
    <ligand>
        <name>NAD(+)</name>
        <dbReference type="ChEBI" id="CHEBI:57540"/>
    </ligand>
</feature>
<feature type="binding site" evidence="1">
    <location>
        <position position="191"/>
    </location>
    <ligand>
        <name>NAD(+)</name>
        <dbReference type="ChEBI" id="CHEBI:57540"/>
    </ligand>
</feature>
<feature type="binding site" evidence="1">
    <location>
        <position position="216"/>
    </location>
    <ligand>
        <name>NAD(+)</name>
        <dbReference type="ChEBI" id="CHEBI:57540"/>
    </ligand>
</feature>
<feature type="binding site" evidence="1">
    <location>
        <position position="234"/>
    </location>
    <ligand>
        <name>NAD(+)</name>
        <dbReference type="ChEBI" id="CHEBI:57540"/>
    </ligand>
</feature>
<gene>
    <name evidence="1" type="primary">cobB</name>
    <name type="ordered locus">BT9727_2843</name>
</gene>
<keyword id="KW-0963">Cytoplasm</keyword>
<keyword id="KW-0479">Metal-binding</keyword>
<keyword id="KW-0520">NAD</keyword>
<keyword id="KW-0808">Transferase</keyword>
<keyword id="KW-0862">Zinc</keyword>
<comment type="function">
    <text evidence="1">NAD-dependent protein deacetylase which modulates the activities of several enzymes which are inactive in their acetylated form.</text>
</comment>
<comment type="catalytic activity">
    <reaction evidence="1">
        <text>N(6)-acetyl-L-lysyl-[protein] + NAD(+) + H2O = 2''-O-acetyl-ADP-D-ribose + nicotinamide + L-lysyl-[protein]</text>
        <dbReference type="Rhea" id="RHEA:43636"/>
        <dbReference type="Rhea" id="RHEA-COMP:9752"/>
        <dbReference type="Rhea" id="RHEA-COMP:10731"/>
        <dbReference type="ChEBI" id="CHEBI:15377"/>
        <dbReference type="ChEBI" id="CHEBI:17154"/>
        <dbReference type="ChEBI" id="CHEBI:29969"/>
        <dbReference type="ChEBI" id="CHEBI:57540"/>
        <dbReference type="ChEBI" id="CHEBI:61930"/>
        <dbReference type="ChEBI" id="CHEBI:83767"/>
        <dbReference type="EC" id="2.3.1.286"/>
    </reaction>
</comment>
<comment type="cofactor">
    <cofactor evidence="1">
        <name>Zn(2+)</name>
        <dbReference type="ChEBI" id="CHEBI:29105"/>
    </cofactor>
    <text evidence="1">Binds 1 zinc ion per subunit.</text>
</comment>
<comment type="subcellular location">
    <subcellularLocation>
        <location evidence="1">Cytoplasm</location>
    </subcellularLocation>
</comment>
<comment type="similarity">
    <text evidence="1">Belongs to the sirtuin family. Class U subfamily.</text>
</comment>
<dbReference type="EC" id="2.3.1.286" evidence="1 2"/>
<dbReference type="EMBL" id="AE017355">
    <property type="protein sequence ID" value="AAT62269.1"/>
    <property type="molecule type" value="Genomic_DNA"/>
</dbReference>
<dbReference type="RefSeq" id="YP_037167.1">
    <property type="nucleotide sequence ID" value="NC_005957.1"/>
</dbReference>
<dbReference type="SMR" id="Q6HH09"/>
<dbReference type="KEGG" id="btk:BT9727_2843"/>
<dbReference type="PATRIC" id="fig|281309.8.peg.3018"/>
<dbReference type="HOGENOM" id="CLU_023643_3_0_9"/>
<dbReference type="Proteomes" id="UP000001301">
    <property type="component" value="Chromosome"/>
</dbReference>
<dbReference type="GO" id="GO:0005737">
    <property type="term" value="C:cytoplasm"/>
    <property type="evidence" value="ECO:0007669"/>
    <property type="project" value="UniProtKB-SubCell"/>
</dbReference>
<dbReference type="GO" id="GO:0017136">
    <property type="term" value="F:histone deacetylase activity, NAD-dependent"/>
    <property type="evidence" value="ECO:0007669"/>
    <property type="project" value="TreeGrafter"/>
</dbReference>
<dbReference type="GO" id="GO:0070403">
    <property type="term" value="F:NAD+ binding"/>
    <property type="evidence" value="ECO:0007669"/>
    <property type="project" value="UniProtKB-UniRule"/>
</dbReference>
<dbReference type="GO" id="GO:0008270">
    <property type="term" value="F:zinc ion binding"/>
    <property type="evidence" value="ECO:0007669"/>
    <property type="project" value="UniProtKB-UniRule"/>
</dbReference>
<dbReference type="CDD" id="cd01413">
    <property type="entry name" value="SIR2_Af2"/>
    <property type="match status" value="1"/>
</dbReference>
<dbReference type="Gene3D" id="3.30.1600.10">
    <property type="entry name" value="SIR2/SIRT2 'Small Domain"/>
    <property type="match status" value="1"/>
</dbReference>
<dbReference type="Gene3D" id="3.40.50.1220">
    <property type="entry name" value="TPP-binding domain"/>
    <property type="match status" value="1"/>
</dbReference>
<dbReference type="HAMAP" id="MF_01968">
    <property type="entry name" value="Sirtuin_ClassU"/>
    <property type="match status" value="1"/>
</dbReference>
<dbReference type="InterPro" id="IPR029035">
    <property type="entry name" value="DHS-like_NAD/FAD-binding_dom"/>
</dbReference>
<dbReference type="InterPro" id="IPR050134">
    <property type="entry name" value="NAD-dep_sirtuin_deacylases"/>
</dbReference>
<dbReference type="InterPro" id="IPR003000">
    <property type="entry name" value="Sirtuin"/>
</dbReference>
<dbReference type="InterPro" id="IPR026591">
    <property type="entry name" value="Sirtuin_cat_small_dom_sf"/>
</dbReference>
<dbReference type="InterPro" id="IPR028628">
    <property type="entry name" value="Sirtuin_class_U"/>
</dbReference>
<dbReference type="InterPro" id="IPR026590">
    <property type="entry name" value="Ssirtuin_cat_dom"/>
</dbReference>
<dbReference type="NCBIfam" id="NF001752">
    <property type="entry name" value="PRK00481.1-1"/>
    <property type="match status" value="1"/>
</dbReference>
<dbReference type="NCBIfam" id="NF001754">
    <property type="entry name" value="PRK00481.1-4"/>
    <property type="match status" value="1"/>
</dbReference>
<dbReference type="PANTHER" id="PTHR11085:SF4">
    <property type="entry name" value="NAD-DEPENDENT PROTEIN DEACYLASE"/>
    <property type="match status" value="1"/>
</dbReference>
<dbReference type="PANTHER" id="PTHR11085">
    <property type="entry name" value="NAD-DEPENDENT PROTEIN DEACYLASE SIRTUIN-5, MITOCHONDRIAL-RELATED"/>
    <property type="match status" value="1"/>
</dbReference>
<dbReference type="Pfam" id="PF02146">
    <property type="entry name" value="SIR2"/>
    <property type="match status" value="1"/>
</dbReference>
<dbReference type="SUPFAM" id="SSF52467">
    <property type="entry name" value="DHS-like NAD/FAD-binding domain"/>
    <property type="match status" value="1"/>
</dbReference>
<dbReference type="PROSITE" id="PS50305">
    <property type="entry name" value="SIRTUIN"/>
    <property type="match status" value="1"/>
</dbReference>
<sequence length="245" mass="28032">MIFVQQFEEVRLILEKAKKITVLTGAGASTESGIPDFRSANGLYADANVEMYLSRGYYNRSPKEFWKHYKEIFQINTFHQYKPNRGHRFLAELEEQGKDITILTQNIDGLHQLGDSKHVIDLHGTLQTAHCPKCKTGYDLQYMIDHEVPRCQKCNFILNPDVVLYGDTLPQYQNAIKRLYETDVLIVMGTSLKVQPVASFPQIAKREVGATTILVNEELTGQEYNFDYVFQNKIGEFVEGLSSIK</sequence>
<reference key="1">
    <citation type="journal article" date="2006" name="J. Bacteriol.">
        <title>Pathogenomic sequence analysis of Bacillus cereus and Bacillus thuringiensis isolates closely related to Bacillus anthracis.</title>
        <authorList>
            <person name="Han C.S."/>
            <person name="Xie G."/>
            <person name="Challacombe J.F."/>
            <person name="Altherr M.R."/>
            <person name="Bhotika S.S."/>
            <person name="Bruce D."/>
            <person name="Campbell C.S."/>
            <person name="Campbell M.L."/>
            <person name="Chen J."/>
            <person name="Chertkov O."/>
            <person name="Cleland C."/>
            <person name="Dimitrijevic M."/>
            <person name="Doggett N.A."/>
            <person name="Fawcett J.J."/>
            <person name="Glavina T."/>
            <person name="Goodwin L.A."/>
            <person name="Hill K.K."/>
            <person name="Hitchcock P."/>
            <person name="Jackson P.J."/>
            <person name="Keim P."/>
            <person name="Kewalramani A.R."/>
            <person name="Longmire J."/>
            <person name="Lucas S."/>
            <person name="Malfatti S."/>
            <person name="McMurry K."/>
            <person name="Meincke L.J."/>
            <person name="Misra M."/>
            <person name="Moseman B.L."/>
            <person name="Mundt M."/>
            <person name="Munk A.C."/>
            <person name="Okinaka R.T."/>
            <person name="Parson-Quintana B."/>
            <person name="Reilly L.P."/>
            <person name="Richardson P."/>
            <person name="Robinson D.L."/>
            <person name="Rubin E."/>
            <person name="Saunders E."/>
            <person name="Tapia R."/>
            <person name="Tesmer J.G."/>
            <person name="Thayer N."/>
            <person name="Thompson L.S."/>
            <person name="Tice H."/>
            <person name="Ticknor L.O."/>
            <person name="Wills P.L."/>
            <person name="Brettin T.S."/>
            <person name="Gilna P."/>
        </authorList>
    </citation>
    <scope>NUCLEOTIDE SEQUENCE [LARGE SCALE GENOMIC DNA]</scope>
    <source>
        <strain>97-27</strain>
    </source>
</reference>
<accession>Q6HH09</accession>
<evidence type="ECO:0000255" key="1">
    <source>
        <dbReference type="HAMAP-Rule" id="MF_01968"/>
    </source>
</evidence>
<evidence type="ECO:0000255" key="2">
    <source>
        <dbReference type="PROSITE-ProRule" id="PRU00236"/>
    </source>
</evidence>